<organism>
    <name type="scientific">Homo sapiens</name>
    <name type="common">Human</name>
    <dbReference type="NCBI Taxonomy" id="9606"/>
    <lineage>
        <taxon>Eukaryota</taxon>
        <taxon>Metazoa</taxon>
        <taxon>Chordata</taxon>
        <taxon>Craniata</taxon>
        <taxon>Vertebrata</taxon>
        <taxon>Euteleostomi</taxon>
        <taxon>Mammalia</taxon>
        <taxon>Eutheria</taxon>
        <taxon>Euarchontoglires</taxon>
        <taxon>Primates</taxon>
        <taxon>Haplorrhini</taxon>
        <taxon>Catarrhini</taxon>
        <taxon>Hominidae</taxon>
        <taxon>Homo</taxon>
    </lineage>
</organism>
<accession>P19623</accession>
<accession>B1AKP9</accession>
<accession>Q15511</accession>
<reference key="1">
    <citation type="journal article" date="1990" name="DNA Cell Biol.">
        <title>Human spermidine synthase: cloning and primary structure.</title>
        <authorList>
            <person name="Wahlfors J."/>
            <person name="Alhonen L."/>
            <person name="Kauppinen L."/>
            <person name="Hyvoenen T."/>
            <person name="Jaenne J."/>
            <person name="Eloranta T."/>
        </authorList>
    </citation>
    <scope>NUCLEOTIDE SEQUENCE [MRNA]</scope>
</reference>
<reference key="2">
    <citation type="journal article" date="1991" name="DNA Cell Biol.">
        <title>Human spermidine synthase gene: structure and chromosomal localization.</title>
        <authorList>
            <person name="Myoehaenen S."/>
            <person name="Kauppinen L."/>
            <person name="Wahlfors J."/>
            <person name="Alhonen L."/>
            <person name="Jaenne J."/>
        </authorList>
    </citation>
    <scope>NUCLEOTIDE SEQUENCE [GENOMIC DNA]</scope>
</reference>
<reference key="3">
    <citation type="journal article" date="2006" name="Nature">
        <title>The DNA sequence and biological annotation of human chromosome 1.</title>
        <authorList>
            <person name="Gregory S.G."/>
            <person name="Barlow K.F."/>
            <person name="McLay K.E."/>
            <person name="Kaul R."/>
            <person name="Swarbreck D."/>
            <person name="Dunham A."/>
            <person name="Scott C.E."/>
            <person name="Howe K.L."/>
            <person name="Woodfine K."/>
            <person name="Spencer C.C.A."/>
            <person name="Jones M.C."/>
            <person name="Gillson C."/>
            <person name="Searle S."/>
            <person name="Zhou Y."/>
            <person name="Kokocinski F."/>
            <person name="McDonald L."/>
            <person name="Evans R."/>
            <person name="Phillips K."/>
            <person name="Atkinson A."/>
            <person name="Cooper R."/>
            <person name="Jones C."/>
            <person name="Hall R.E."/>
            <person name="Andrews T.D."/>
            <person name="Lloyd C."/>
            <person name="Ainscough R."/>
            <person name="Almeida J.P."/>
            <person name="Ambrose K.D."/>
            <person name="Anderson F."/>
            <person name="Andrew R.W."/>
            <person name="Ashwell R.I.S."/>
            <person name="Aubin K."/>
            <person name="Babbage A.K."/>
            <person name="Bagguley C.L."/>
            <person name="Bailey J."/>
            <person name="Beasley H."/>
            <person name="Bethel G."/>
            <person name="Bird C.P."/>
            <person name="Bray-Allen S."/>
            <person name="Brown J.Y."/>
            <person name="Brown A.J."/>
            <person name="Buckley D."/>
            <person name="Burton J."/>
            <person name="Bye J."/>
            <person name="Carder C."/>
            <person name="Chapman J.C."/>
            <person name="Clark S.Y."/>
            <person name="Clarke G."/>
            <person name="Clee C."/>
            <person name="Cobley V."/>
            <person name="Collier R.E."/>
            <person name="Corby N."/>
            <person name="Coville G.J."/>
            <person name="Davies J."/>
            <person name="Deadman R."/>
            <person name="Dunn M."/>
            <person name="Earthrowl M."/>
            <person name="Ellington A.G."/>
            <person name="Errington H."/>
            <person name="Frankish A."/>
            <person name="Frankland J."/>
            <person name="French L."/>
            <person name="Garner P."/>
            <person name="Garnett J."/>
            <person name="Gay L."/>
            <person name="Ghori M.R.J."/>
            <person name="Gibson R."/>
            <person name="Gilby L.M."/>
            <person name="Gillett W."/>
            <person name="Glithero R.J."/>
            <person name="Grafham D.V."/>
            <person name="Griffiths C."/>
            <person name="Griffiths-Jones S."/>
            <person name="Grocock R."/>
            <person name="Hammond S."/>
            <person name="Harrison E.S.I."/>
            <person name="Hart E."/>
            <person name="Haugen E."/>
            <person name="Heath P.D."/>
            <person name="Holmes S."/>
            <person name="Holt K."/>
            <person name="Howden P.J."/>
            <person name="Hunt A.R."/>
            <person name="Hunt S.E."/>
            <person name="Hunter G."/>
            <person name="Isherwood J."/>
            <person name="James R."/>
            <person name="Johnson C."/>
            <person name="Johnson D."/>
            <person name="Joy A."/>
            <person name="Kay M."/>
            <person name="Kershaw J.K."/>
            <person name="Kibukawa M."/>
            <person name="Kimberley A.M."/>
            <person name="King A."/>
            <person name="Knights A.J."/>
            <person name="Lad H."/>
            <person name="Laird G."/>
            <person name="Lawlor S."/>
            <person name="Leongamornlert D.A."/>
            <person name="Lloyd D.M."/>
            <person name="Loveland J."/>
            <person name="Lovell J."/>
            <person name="Lush M.J."/>
            <person name="Lyne R."/>
            <person name="Martin S."/>
            <person name="Mashreghi-Mohammadi M."/>
            <person name="Matthews L."/>
            <person name="Matthews N.S.W."/>
            <person name="McLaren S."/>
            <person name="Milne S."/>
            <person name="Mistry S."/>
            <person name="Moore M.J.F."/>
            <person name="Nickerson T."/>
            <person name="O'Dell C.N."/>
            <person name="Oliver K."/>
            <person name="Palmeiri A."/>
            <person name="Palmer S.A."/>
            <person name="Parker A."/>
            <person name="Patel D."/>
            <person name="Pearce A.V."/>
            <person name="Peck A.I."/>
            <person name="Pelan S."/>
            <person name="Phelps K."/>
            <person name="Phillimore B.J."/>
            <person name="Plumb R."/>
            <person name="Rajan J."/>
            <person name="Raymond C."/>
            <person name="Rouse G."/>
            <person name="Saenphimmachak C."/>
            <person name="Sehra H.K."/>
            <person name="Sheridan E."/>
            <person name="Shownkeen R."/>
            <person name="Sims S."/>
            <person name="Skuce C.D."/>
            <person name="Smith M."/>
            <person name="Steward C."/>
            <person name="Subramanian S."/>
            <person name="Sycamore N."/>
            <person name="Tracey A."/>
            <person name="Tromans A."/>
            <person name="Van Helmond Z."/>
            <person name="Wall M."/>
            <person name="Wallis J.M."/>
            <person name="White S."/>
            <person name="Whitehead S.L."/>
            <person name="Wilkinson J.E."/>
            <person name="Willey D.L."/>
            <person name="Williams H."/>
            <person name="Wilming L."/>
            <person name="Wray P.W."/>
            <person name="Wu Z."/>
            <person name="Coulson A."/>
            <person name="Vaudin M."/>
            <person name="Sulston J.E."/>
            <person name="Durbin R.M."/>
            <person name="Hubbard T."/>
            <person name="Wooster R."/>
            <person name="Dunham I."/>
            <person name="Carter N.P."/>
            <person name="McVean G."/>
            <person name="Ross M.T."/>
            <person name="Harrow J."/>
            <person name="Olson M.V."/>
            <person name="Beck S."/>
            <person name="Rogers J."/>
            <person name="Bentley D.R."/>
        </authorList>
    </citation>
    <scope>NUCLEOTIDE SEQUENCE [LARGE SCALE GENOMIC DNA]</scope>
</reference>
<reference key="4">
    <citation type="submission" date="2005-07" db="EMBL/GenBank/DDBJ databases">
        <authorList>
            <person name="Mural R.J."/>
            <person name="Istrail S."/>
            <person name="Sutton G.G."/>
            <person name="Florea L."/>
            <person name="Halpern A.L."/>
            <person name="Mobarry C.M."/>
            <person name="Lippert R."/>
            <person name="Walenz B."/>
            <person name="Shatkay H."/>
            <person name="Dew I."/>
            <person name="Miller J.R."/>
            <person name="Flanigan M.J."/>
            <person name="Edwards N.J."/>
            <person name="Bolanos R."/>
            <person name="Fasulo D."/>
            <person name="Halldorsson B.V."/>
            <person name="Hannenhalli S."/>
            <person name="Turner R."/>
            <person name="Yooseph S."/>
            <person name="Lu F."/>
            <person name="Nusskern D.R."/>
            <person name="Shue B.C."/>
            <person name="Zheng X.H."/>
            <person name="Zhong F."/>
            <person name="Delcher A.L."/>
            <person name="Huson D.H."/>
            <person name="Kravitz S.A."/>
            <person name="Mouchard L."/>
            <person name="Reinert K."/>
            <person name="Remington K.A."/>
            <person name="Clark A.G."/>
            <person name="Waterman M.S."/>
            <person name="Eichler E.E."/>
            <person name="Adams M.D."/>
            <person name="Hunkapiller M.W."/>
            <person name="Myers E.W."/>
            <person name="Venter J.C."/>
        </authorList>
    </citation>
    <scope>NUCLEOTIDE SEQUENCE [LARGE SCALE GENOMIC DNA]</scope>
</reference>
<reference key="5">
    <citation type="journal article" date="2004" name="Genome Res.">
        <title>The status, quality, and expansion of the NIH full-length cDNA project: the Mammalian Gene Collection (MGC).</title>
        <authorList>
            <consortium name="The MGC Project Team"/>
        </authorList>
    </citation>
    <scope>NUCLEOTIDE SEQUENCE [LARGE SCALE MRNA]</scope>
    <source>
        <tissue>Lung</tissue>
        <tissue>Skin</tissue>
    </source>
</reference>
<reference key="6">
    <citation type="journal article" date="2009" name="Anal. Chem.">
        <title>Lys-N and trypsin cover complementary parts of the phosphoproteome in a refined SCX-based approach.</title>
        <authorList>
            <person name="Gauci S."/>
            <person name="Helbig A.O."/>
            <person name="Slijper M."/>
            <person name="Krijgsveld J."/>
            <person name="Heck A.J."/>
            <person name="Mohammed S."/>
        </authorList>
    </citation>
    <scope>ACETYLATION [LARGE SCALE ANALYSIS] AT MET-1</scope>
    <scope>IDENTIFICATION BY MASS SPECTROMETRY [LARGE SCALE ANALYSIS]</scope>
</reference>
<reference key="7">
    <citation type="journal article" date="2011" name="BMC Syst. Biol.">
        <title>Initial characterization of the human central proteome.</title>
        <authorList>
            <person name="Burkard T.R."/>
            <person name="Planyavsky M."/>
            <person name="Kaupe I."/>
            <person name="Breitwieser F.P."/>
            <person name="Buerckstuemmer T."/>
            <person name="Bennett K.L."/>
            <person name="Superti-Furga G."/>
            <person name="Colinge J."/>
        </authorList>
    </citation>
    <scope>IDENTIFICATION BY MASS SPECTROMETRY [LARGE SCALE ANALYSIS]</scope>
</reference>
<reference key="8">
    <citation type="journal article" date="2012" name="Mol. Cell. Proteomics">
        <title>Comparative large-scale characterisation of plant vs. mammal proteins reveals similar and idiosyncratic N-alpha acetylation features.</title>
        <authorList>
            <person name="Bienvenut W.V."/>
            <person name="Sumpton D."/>
            <person name="Martinez A."/>
            <person name="Lilla S."/>
            <person name="Espagne C."/>
            <person name="Meinnel T."/>
            <person name="Giglione C."/>
        </authorList>
    </citation>
    <scope>ACETYLATION [LARGE SCALE ANALYSIS] AT MET-1</scope>
    <scope>IDENTIFICATION BY MASS SPECTROMETRY [LARGE SCALE ANALYSIS]</scope>
</reference>
<reference key="9">
    <citation type="journal article" date="2012" name="Proc. Natl. Acad. Sci. U.S.A.">
        <title>N-terminal acetylome analyses and functional insights of the N-terminal acetyltransferase NatB.</title>
        <authorList>
            <person name="Van Damme P."/>
            <person name="Lasa M."/>
            <person name="Polevoda B."/>
            <person name="Gazquez C."/>
            <person name="Elosegui-Artola A."/>
            <person name="Kim D.S."/>
            <person name="De Juan-Pardo E."/>
            <person name="Demeyer K."/>
            <person name="Hole K."/>
            <person name="Larrea E."/>
            <person name="Timmerman E."/>
            <person name="Prieto J."/>
            <person name="Arnesen T."/>
            <person name="Sherman F."/>
            <person name="Gevaert K."/>
            <person name="Aldabe R."/>
        </authorList>
    </citation>
    <scope>ACETYLATION [LARGE SCALE ANALYSIS] AT MET-1</scope>
    <scope>IDENTIFICATION BY MASS SPECTROMETRY [LARGE SCALE ANALYSIS]</scope>
</reference>
<reference key="10">
    <citation type="journal article" date="2007" name="Biochemistry">
        <title>Structure and mechanism of spermidine synthases.</title>
        <authorList>
            <person name="Wu H."/>
            <person name="Min J."/>
            <person name="Ikeguchi Y."/>
            <person name="Zeng H."/>
            <person name="Dong A."/>
            <person name="Loppnau P."/>
            <person name="Pegg A.E."/>
            <person name="Plotnikov A.N."/>
        </authorList>
    </citation>
    <scope>X-RAY CRYSTALLOGRAPHY (1.89 ANGSTROMS) IN COMPLEXES WITH SPERMIDINE; PUTRESCINE; MTA AND S-ADENOSYLMETHIONINAMINE</scope>
    <scope>FUNCTION</scope>
    <scope>CATALYTIC ACTIVITY</scope>
    <scope>BIOPHYSICOCHEMICAL PROPERTIES</scope>
    <scope>SUBUNIT</scope>
</reference>
<gene>
    <name type="primary">SRM</name>
    <name type="synonym">SPS1</name>
    <name type="synonym">SRML1</name>
</gene>
<dbReference type="EC" id="2.5.1.16"/>
<dbReference type="EMBL" id="M34338">
    <property type="protein sequence ID" value="AAA36633.1"/>
    <property type="molecule type" value="mRNA"/>
</dbReference>
<dbReference type="EMBL" id="M64231">
    <property type="protein sequence ID" value="AAA60574.1"/>
    <property type="molecule type" value="Genomic_DNA"/>
</dbReference>
<dbReference type="EMBL" id="AL109811">
    <property type="status" value="NOT_ANNOTATED_CDS"/>
    <property type="molecule type" value="Genomic_DNA"/>
</dbReference>
<dbReference type="EMBL" id="CH471130">
    <property type="protein sequence ID" value="EAW71675.1"/>
    <property type="molecule type" value="Genomic_DNA"/>
</dbReference>
<dbReference type="EMBL" id="BC000309">
    <property type="protein sequence ID" value="AAH00309.1"/>
    <property type="molecule type" value="mRNA"/>
</dbReference>
<dbReference type="EMBL" id="BC033106">
    <property type="protein sequence ID" value="AAH33106.1"/>
    <property type="molecule type" value="mRNA"/>
</dbReference>
<dbReference type="CCDS" id="CCDS125.1"/>
<dbReference type="PIR" id="A32610">
    <property type="entry name" value="A32610"/>
</dbReference>
<dbReference type="RefSeq" id="NP_003123.2">
    <property type="nucleotide sequence ID" value="NM_003132.3"/>
</dbReference>
<dbReference type="PDB" id="2O05">
    <property type="method" value="X-ray"/>
    <property type="resolution" value="2.00 A"/>
    <property type="chains" value="A/B=1-302"/>
</dbReference>
<dbReference type="PDB" id="2O06">
    <property type="method" value="X-ray"/>
    <property type="resolution" value="2.00 A"/>
    <property type="chains" value="A/B=1-302"/>
</dbReference>
<dbReference type="PDB" id="2O07">
    <property type="method" value="X-ray"/>
    <property type="resolution" value="1.89 A"/>
    <property type="chains" value="A/B=1-302"/>
</dbReference>
<dbReference type="PDB" id="2O0L">
    <property type="method" value="X-ray"/>
    <property type="resolution" value="1.99 A"/>
    <property type="chains" value="A/B=1-302"/>
</dbReference>
<dbReference type="PDB" id="3RW9">
    <property type="method" value="X-ray"/>
    <property type="resolution" value="2.00 A"/>
    <property type="chains" value="A/B=1-302"/>
</dbReference>
<dbReference type="PDBsum" id="2O05"/>
<dbReference type="PDBsum" id="2O06"/>
<dbReference type="PDBsum" id="2O07"/>
<dbReference type="PDBsum" id="2O0L"/>
<dbReference type="PDBsum" id="3RW9"/>
<dbReference type="SMR" id="P19623"/>
<dbReference type="BioGRID" id="112601">
    <property type="interactions" value="72"/>
</dbReference>
<dbReference type="FunCoup" id="P19623">
    <property type="interactions" value="1239"/>
</dbReference>
<dbReference type="IntAct" id="P19623">
    <property type="interactions" value="23"/>
</dbReference>
<dbReference type="STRING" id="9606.ENSP00000366156"/>
<dbReference type="BindingDB" id="P19623"/>
<dbReference type="ChEMBL" id="CHEMBL4232"/>
<dbReference type="DrugBank" id="DB00118">
    <property type="generic name" value="Ademetionine"/>
</dbReference>
<dbReference type="GlyGen" id="P19623">
    <property type="glycosylation" value="1 site, 1 O-linked glycan (1 site)"/>
</dbReference>
<dbReference type="iPTMnet" id="P19623"/>
<dbReference type="MetOSite" id="P19623"/>
<dbReference type="PhosphoSitePlus" id="P19623"/>
<dbReference type="SwissPalm" id="P19623"/>
<dbReference type="BioMuta" id="SRM"/>
<dbReference type="DMDM" id="134811"/>
<dbReference type="jPOST" id="P19623"/>
<dbReference type="MassIVE" id="P19623"/>
<dbReference type="PaxDb" id="9606-ENSP00000366156"/>
<dbReference type="PeptideAtlas" id="P19623"/>
<dbReference type="ProteomicsDB" id="53682"/>
<dbReference type="Pumba" id="P19623"/>
<dbReference type="Antibodypedia" id="13673">
    <property type="antibodies" value="245 antibodies from 28 providers"/>
</dbReference>
<dbReference type="DNASU" id="6723"/>
<dbReference type="Ensembl" id="ENST00000376957.7">
    <property type="protein sequence ID" value="ENSP00000366156.2"/>
    <property type="gene ID" value="ENSG00000116649.10"/>
</dbReference>
<dbReference type="GeneID" id="6723"/>
<dbReference type="KEGG" id="hsa:6723"/>
<dbReference type="MANE-Select" id="ENST00000376957.7">
    <property type="protein sequence ID" value="ENSP00000366156.2"/>
    <property type="RefSeq nucleotide sequence ID" value="NM_003132.3"/>
    <property type="RefSeq protein sequence ID" value="NP_003123.2"/>
</dbReference>
<dbReference type="UCSC" id="uc001arz.2">
    <property type="organism name" value="human"/>
</dbReference>
<dbReference type="AGR" id="HGNC:11296"/>
<dbReference type="CTD" id="6723"/>
<dbReference type="DisGeNET" id="6723"/>
<dbReference type="GeneCards" id="SRM"/>
<dbReference type="HGNC" id="HGNC:11296">
    <property type="gene designation" value="SRM"/>
</dbReference>
<dbReference type="HPA" id="ENSG00000116649">
    <property type="expression patterns" value="Low tissue specificity"/>
</dbReference>
<dbReference type="MIM" id="182891">
    <property type="type" value="gene"/>
</dbReference>
<dbReference type="neXtProt" id="NX_P19623"/>
<dbReference type="OpenTargets" id="ENSG00000116649"/>
<dbReference type="PharmGKB" id="PA36120"/>
<dbReference type="VEuPathDB" id="HostDB:ENSG00000116649"/>
<dbReference type="eggNOG" id="KOG1562">
    <property type="taxonomic scope" value="Eukaryota"/>
</dbReference>
<dbReference type="GeneTree" id="ENSGT00870000136521"/>
<dbReference type="HOGENOM" id="CLU_048199_3_1_1"/>
<dbReference type="InParanoid" id="P19623"/>
<dbReference type="OMA" id="FLYHEMM"/>
<dbReference type="OrthoDB" id="38125at2759"/>
<dbReference type="PAN-GO" id="P19623">
    <property type="GO annotations" value="2 GO annotations based on evolutionary models"/>
</dbReference>
<dbReference type="PhylomeDB" id="P19623"/>
<dbReference type="TreeFam" id="TF314466"/>
<dbReference type="BioCyc" id="MetaCyc:HS04027-MONOMER"/>
<dbReference type="BRENDA" id="2.5.1.16">
    <property type="organism ID" value="2681"/>
</dbReference>
<dbReference type="PathwayCommons" id="P19623"/>
<dbReference type="Reactome" id="R-HSA-351202">
    <property type="pathway name" value="Metabolism of polyamines"/>
</dbReference>
<dbReference type="SABIO-RK" id="P19623"/>
<dbReference type="SignaLink" id="P19623"/>
<dbReference type="UniPathway" id="UPA00248">
    <property type="reaction ID" value="UER00314"/>
</dbReference>
<dbReference type="BioGRID-ORCS" id="6723">
    <property type="hits" value="54 hits in 1164 CRISPR screens"/>
</dbReference>
<dbReference type="ChiTaRS" id="SRM">
    <property type="organism name" value="human"/>
</dbReference>
<dbReference type="EvolutionaryTrace" id="P19623"/>
<dbReference type="GenomeRNAi" id="6723"/>
<dbReference type="Pharos" id="P19623">
    <property type="development level" value="Tchem"/>
</dbReference>
<dbReference type="PRO" id="PR:P19623"/>
<dbReference type="Proteomes" id="UP000005640">
    <property type="component" value="Chromosome 1"/>
</dbReference>
<dbReference type="RNAct" id="P19623">
    <property type="molecule type" value="protein"/>
</dbReference>
<dbReference type="Bgee" id="ENSG00000116649">
    <property type="expression patterns" value="Expressed in body of pancreas and 200 other cell types or tissues"/>
</dbReference>
<dbReference type="ExpressionAtlas" id="P19623">
    <property type="expression patterns" value="baseline and differential"/>
</dbReference>
<dbReference type="GO" id="GO:0005829">
    <property type="term" value="C:cytosol"/>
    <property type="evidence" value="ECO:0000318"/>
    <property type="project" value="GO_Central"/>
</dbReference>
<dbReference type="GO" id="GO:0042802">
    <property type="term" value="F:identical protein binding"/>
    <property type="evidence" value="ECO:0000353"/>
    <property type="project" value="IntAct"/>
</dbReference>
<dbReference type="GO" id="GO:0042803">
    <property type="term" value="F:protein homodimerization activity"/>
    <property type="evidence" value="ECO:0000314"/>
    <property type="project" value="UniProtKB"/>
</dbReference>
<dbReference type="GO" id="GO:0004766">
    <property type="term" value="F:spermidine synthase activity"/>
    <property type="evidence" value="ECO:0000314"/>
    <property type="project" value="UniProtKB"/>
</dbReference>
<dbReference type="GO" id="GO:1990830">
    <property type="term" value="P:cellular response to leukemia inhibitory factor"/>
    <property type="evidence" value="ECO:0007669"/>
    <property type="project" value="Ensembl"/>
</dbReference>
<dbReference type="GO" id="GO:0006595">
    <property type="term" value="P:polyamine metabolic process"/>
    <property type="evidence" value="ECO:0000304"/>
    <property type="project" value="Reactome"/>
</dbReference>
<dbReference type="GO" id="GO:0008295">
    <property type="term" value="P:spermidine biosynthetic process"/>
    <property type="evidence" value="ECO:0000314"/>
    <property type="project" value="UniProtKB"/>
</dbReference>
<dbReference type="CDD" id="cd02440">
    <property type="entry name" value="AdoMet_MTases"/>
    <property type="match status" value="1"/>
</dbReference>
<dbReference type="FunFam" id="2.30.140.10:FF:000001">
    <property type="entry name" value="SPE3p Spermidine synthase"/>
    <property type="match status" value="1"/>
</dbReference>
<dbReference type="FunFam" id="3.40.50.150:FF:000013">
    <property type="entry name" value="Spermidine synthase"/>
    <property type="match status" value="1"/>
</dbReference>
<dbReference type="Gene3D" id="2.30.140.10">
    <property type="entry name" value="Spermidine synthase, tetramerisation domain"/>
    <property type="match status" value="1"/>
</dbReference>
<dbReference type="Gene3D" id="3.40.50.150">
    <property type="entry name" value="Vaccinia Virus protein VP39"/>
    <property type="match status" value="1"/>
</dbReference>
<dbReference type="HAMAP" id="MF_00198">
    <property type="entry name" value="Spermidine_synth"/>
    <property type="match status" value="1"/>
</dbReference>
<dbReference type="InterPro" id="IPR030374">
    <property type="entry name" value="PABS"/>
</dbReference>
<dbReference type="InterPro" id="IPR030373">
    <property type="entry name" value="PABS_CS"/>
</dbReference>
<dbReference type="InterPro" id="IPR029063">
    <property type="entry name" value="SAM-dependent_MTases_sf"/>
</dbReference>
<dbReference type="InterPro" id="IPR001045">
    <property type="entry name" value="Spermi_synthase"/>
</dbReference>
<dbReference type="InterPro" id="IPR030668">
    <property type="entry name" value="Spermi_synthase_euk"/>
</dbReference>
<dbReference type="InterPro" id="IPR035246">
    <property type="entry name" value="Spermidine_synt_N"/>
</dbReference>
<dbReference type="InterPro" id="IPR037163">
    <property type="entry name" value="Spermidine_synt_N_sf"/>
</dbReference>
<dbReference type="NCBIfam" id="NF002010">
    <property type="entry name" value="PRK00811.1"/>
    <property type="match status" value="1"/>
</dbReference>
<dbReference type="NCBIfam" id="TIGR00417">
    <property type="entry name" value="speE"/>
    <property type="match status" value="1"/>
</dbReference>
<dbReference type="PANTHER" id="PTHR11558:SF11">
    <property type="entry name" value="SPERMIDINE SYNTHASE"/>
    <property type="match status" value="1"/>
</dbReference>
<dbReference type="PANTHER" id="PTHR11558">
    <property type="entry name" value="SPERMIDINE/SPERMINE SYNTHASE"/>
    <property type="match status" value="1"/>
</dbReference>
<dbReference type="Pfam" id="PF17284">
    <property type="entry name" value="Spermine_synt_N"/>
    <property type="match status" value="1"/>
</dbReference>
<dbReference type="Pfam" id="PF01564">
    <property type="entry name" value="Spermine_synth"/>
    <property type="match status" value="1"/>
</dbReference>
<dbReference type="PIRSF" id="PIRSF000502">
    <property type="entry name" value="Spermidine_synth"/>
    <property type="match status" value="1"/>
</dbReference>
<dbReference type="SUPFAM" id="SSF53335">
    <property type="entry name" value="S-adenosyl-L-methionine-dependent methyltransferases"/>
    <property type="match status" value="1"/>
</dbReference>
<dbReference type="PROSITE" id="PS01330">
    <property type="entry name" value="PABS_1"/>
    <property type="match status" value="1"/>
</dbReference>
<dbReference type="PROSITE" id="PS51006">
    <property type="entry name" value="PABS_2"/>
    <property type="match status" value="1"/>
</dbReference>
<feature type="chain" id="PRO_0000156445" description="Spermidine synthase">
    <location>
        <begin position="1"/>
        <end position="302"/>
    </location>
</feature>
<feature type="domain" description="PABS">
    <location>
        <begin position="18"/>
        <end position="253"/>
    </location>
</feature>
<feature type="active site" description="Proton acceptor" evidence="1">
    <location>
        <position position="173"/>
    </location>
</feature>
<feature type="binding site">
    <location>
        <position position="49"/>
    </location>
    <ligand>
        <name>S-adenosyl 3-(methylsulfanyl)propylamine</name>
        <dbReference type="ChEBI" id="CHEBI:57443"/>
    </ligand>
</feature>
<feature type="binding site">
    <location>
        <position position="79"/>
    </location>
    <ligand>
        <name>putrescine</name>
        <dbReference type="ChEBI" id="CHEBI:326268"/>
    </ligand>
</feature>
<feature type="binding site">
    <location>
        <position position="80"/>
    </location>
    <ligand>
        <name>S-adenosyl 3-(methylsulfanyl)propylamine</name>
        <dbReference type="ChEBI" id="CHEBI:57443"/>
    </ligand>
</feature>
<feature type="binding site">
    <location>
        <position position="104"/>
    </location>
    <ligand>
        <name>S-adenosyl 3-(methylsulfanyl)propylamine</name>
        <dbReference type="ChEBI" id="CHEBI:57443"/>
    </ligand>
</feature>
<feature type="binding site">
    <location>
        <position position="124"/>
    </location>
    <ligand>
        <name>S-adenosyl 3-(methylsulfanyl)propylamine</name>
        <dbReference type="ChEBI" id="CHEBI:57443"/>
    </ligand>
</feature>
<feature type="binding site">
    <location>
        <begin position="155"/>
        <end position="156"/>
    </location>
    <ligand>
        <name>S-adenosyl 3-(methylsulfanyl)propylamine</name>
        <dbReference type="ChEBI" id="CHEBI:57443"/>
    </ligand>
</feature>
<feature type="binding site">
    <location>
        <begin position="173"/>
        <end position="176"/>
    </location>
    <ligand>
        <name>putrescine</name>
        <dbReference type="ChEBI" id="CHEBI:326268"/>
    </ligand>
</feature>
<feature type="binding site">
    <location>
        <position position="173"/>
    </location>
    <ligand>
        <name>S-adenosyl 3-(methylsulfanyl)propylamine</name>
        <dbReference type="ChEBI" id="CHEBI:57443"/>
    </ligand>
</feature>
<feature type="binding site">
    <location>
        <position position="241"/>
    </location>
    <ligand>
        <name>putrescine</name>
        <dbReference type="ChEBI" id="CHEBI:326268"/>
    </ligand>
</feature>
<feature type="modified residue" description="N-acetylmethionine" evidence="4 5 6">
    <location>
        <position position="1"/>
    </location>
</feature>
<feature type="sequence variant" id="VAR_011807" description="In dbSNP:rs1049932.">
    <original>L</original>
    <variation>V</variation>
    <location>
        <position position="149"/>
    </location>
</feature>
<feature type="sequence conflict" description="In Ref. 1; AAA36633." evidence="3" ref="1">
    <original>Q</original>
    <variation>E</variation>
    <location>
        <position position="210"/>
    </location>
</feature>
<feature type="strand" evidence="7">
    <location>
        <begin position="20"/>
        <end position="23"/>
    </location>
</feature>
<feature type="strand" evidence="7">
    <location>
        <begin position="31"/>
        <end position="45"/>
    </location>
</feature>
<feature type="strand" evidence="7">
    <location>
        <begin position="47"/>
        <end position="59"/>
    </location>
</feature>
<feature type="strand" evidence="7">
    <location>
        <begin position="61"/>
        <end position="65"/>
    </location>
</feature>
<feature type="strand" evidence="7">
    <location>
        <begin position="68"/>
        <end position="72"/>
    </location>
</feature>
<feature type="turn" evidence="7">
    <location>
        <begin position="73"/>
        <end position="76"/>
    </location>
</feature>
<feature type="helix" evidence="7">
    <location>
        <begin position="77"/>
        <end position="88"/>
    </location>
</feature>
<feature type="strand" evidence="7">
    <location>
        <begin position="91"/>
        <end position="93"/>
    </location>
</feature>
<feature type="strand" evidence="7">
    <location>
        <begin position="96"/>
        <end position="101"/>
    </location>
</feature>
<feature type="helix" evidence="7">
    <location>
        <begin position="106"/>
        <end position="111"/>
    </location>
</feature>
<feature type="strand" evidence="7">
    <location>
        <begin position="119"/>
        <end position="125"/>
    </location>
</feature>
<feature type="helix" evidence="7">
    <location>
        <begin position="127"/>
        <end position="136"/>
    </location>
</feature>
<feature type="helix" evidence="7">
    <location>
        <begin position="138"/>
        <end position="141"/>
    </location>
</feature>
<feature type="helix" evidence="7">
    <location>
        <begin position="142"/>
        <end position="145"/>
    </location>
</feature>
<feature type="strand" evidence="7">
    <location>
        <begin position="149"/>
        <end position="154"/>
    </location>
</feature>
<feature type="helix" evidence="7">
    <location>
        <begin position="156"/>
        <end position="161"/>
    </location>
</feature>
<feature type="strand" evidence="7">
    <location>
        <begin position="167"/>
        <end position="173"/>
    </location>
</feature>
<feature type="helix" evidence="7">
    <location>
        <begin position="179"/>
        <end position="185"/>
    </location>
</feature>
<feature type="helix" evidence="7">
    <location>
        <begin position="188"/>
        <end position="196"/>
    </location>
</feature>
<feature type="strand" evidence="7">
    <location>
        <begin position="197"/>
        <end position="208"/>
    </location>
</feature>
<feature type="turn" evidence="7">
    <location>
        <begin position="210"/>
        <end position="212"/>
    </location>
</feature>
<feature type="helix" evidence="7">
    <location>
        <begin position="214"/>
        <end position="227"/>
    </location>
</feature>
<feature type="strand" evidence="7">
    <location>
        <begin position="229"/>
        <end position="237"/>
    </location>
</feature>
<feature type="helix" evidence="7">
    <location>
        <begin position="242"/>
        <end position="244"/>
    </location>
</feature>
<feature type="strand" evidence="7">
    <location>
        <begin position="245"/>
        <end position="254"/>
    </location>
</feature>
<feature type="strand" evidence="7">
    <location>
        <begin position="259"/>
        <end position="261"/>
    </location>
</feature>
<feature type="helix" evidence="7">
    <location>
        <begin position="268"/>
        <end position="273"/>
    </location>
</feature>
<feature type="helix" evidence="7">
    <location>
        <begin position="281"/>
        <end position="286"/>
    </location>
</feature>
<feature type="helix" evidence="7">
    <location>
        <begin position="292"/>
        <end position="299"/>
    </location>
</feature>
<keyword id="KW-0002">3D-structure</keyword>
<keyword id="KW-0007">Acetylation</keyword>
<keyword id="KW-0620">Polyamine biosynthesis</keyword>
<keyword id="KW-1267">Proteomics identification</keyword>
<keyword id="KW-1185">Reference proteome</keyword>
<keyword id="KW-0745">Spermidine biosynthesis</keyword>
<keyword id="KW-0808">Transferase</keyword>
<sequence length="302" mass="33825">MEPGPDGPAASGPAAIREGWFRETCSLWPGQALSLQVEQLLHHRRSRYQDILVFRSKTYGNVLVLDGVIQCTERDEFSYQEMIANLPLCSHPNPRKVLIIGGGDGGVLREVVKHPSVESVVQCEIDEDVIQVSKKFLPGMAIGYSSSKLTLHVGDGFEFMKQNQDAFDVIITDSSDPMGPAESLFKESYYQLMKTALKEDGVLCCQGECQWLHLDLIKEMRQFCQSLFPVVAYAYCTIPTYPSGQIGFMLCSKNPSTNFQEPVQPLTQQQVAQMQLKYYNSDVHRAAFVLPEFARKALNDVS</sequence>
<name>SPEE_HUMAN</name>
<comment type="function">
    <text evidence="2">Catalyzes the production of spermidine from putrescine and decarboxylated S-adenosylmethionine (dcSAM). Has a strong preference for putrescine as substrate, and has very low activity towards 1,3-diaminopropane. Has extremely low activity towards spermidine.</text>
</comment>
<comment type="catalytic activity">
    <reaction evidence="2">
        <text>S-adenosyl 3-(methylsulfanyl)propylamine + putrescine = S-methyl-5'-thioadenosine + spermidine + H(+)</text>
        <dbReference type="Rhea" id="RHEA:12721"/>
        <dbReference type="ChEBI" id="CHEBI:15378"/>
        <dbReference type="ChEBI" id="CHEBI:17509"/>
        <dbReference type="ChEBI" id="CHEBI:57443"/>
        <dbReference type="ChEBI" id="CHEBI:57834"/>
        <dbReference type="ChEBI" id="CHEBI:326268"/>
        <dbReference type="EC" id="2.5.1.16"/>
    </reaction>
</comment>
<comment type="activity regulation">
    <text>The activity is thought to be regulated mainly by the availability of decarboxylated S-adenosylmethionine.</text>
</comment>
<comment type="biophysicochemical properties">
    <kinetics>
        <KM evidence="2">20 uM for putrescine</KM>
        <KM evidence="2">0.9 uM for S-adenosylmethioninamine</KM>
    </kinetics>
</comment>
<comment type="pathway">
    <text>Amine and polyamine biosynthesis; spermidine biosynthesis; spermidine from putrescine: step 1/1.</text>
</comment>
<comment type="subunit">
    <text evidence="2">Homodimer or homotetramer.</text>
</comment>
<comment type="interaction">
    <interactant intactId="EBI-1056183">
        <id>P19623</id>
    </interactant>
    <interactant intactId="EBI-1056183">
        <id>P19623</id>
        <label>SRM</label>
    </interactant>
    <organismsDiffer>false</organismsDiffer>
    <experiments>6</experiments>
</comment>
<comment type="interaction">
    <interactant intactId="EBI-1056183">
        <id>P19623</id>
    </interactant>
    <interactant intactId="EBI-710997">
        <id>P54274</id>
        <label>TERF1</label>
    </interactant>
    <organismsDiffer>false</organismsDiffer>
    <experiments>2</experiments>
</comment>
<comment type="similarity">
    <text evidence="3">Belongs to the spermidine/spermine synthase family.</text>
</comment>
<protein>
    <recommendedName>
        <fullName>Spermidine synthase</fullName>
        <shortName>SPDSY</shortName>
        <ecNumber>2.5.1.16</ecNumber>
    </recommendedName>
    <alternativeName>
        <fullName>Putrescine aminopropyltransferase</fullName>
    </alternativeName>
</protein>
<evidence type="ECO:0000250" key="1"/>
<evidence type="ECO:0000269" key="2">
    <source>
    </source>
</evidence>
<evidence type="ECO:0000305" key="3"/>
<evidence type="ECO:0007744" key="4">
    <source>
    </source>
</evidence>
<evidence type="ECO:0007744" key="5">
    <source>
    </source>
</evidence>
<evidence type="ECO:0007744" key="6">
    <source>
    </source>
</evidence>
<evidence type="ECO:0007829" key="7">
    <source>
        <dbReference type="PDB" id="2O07"/>
    </source>
</evidence>
<proteinExistence type="evidence at protein level"/>